<name>GPDA_STRU0</name>
<accession>B9DVX9</accession>
<organism>
    <name type="scientific">Streptococcus uberis (strain ATCC BAA-854 / 0140J)</name>
    <dbReference type="NCBI Taxonomy" id="218495"/>
    <lineage>
        <taxon>Bacteria</taxon>
        <taxon>Bacillati</taxon>
        <taxon>Bacillota</taxon>
        <taxon>Bacilli</taxon>
        <taxon>Lactobacillales</taxon>
        <taxon>Streptococcaceae</taxon>
        <taxon>Streptococcus</taxon>
    </lineage>
</organism>
<dbReference type="EC" id="1.1.1.94" evidence="1"/>
<dbReference type="EMBL" id="AM946015">
    <property type="protein sequence ID" value="CAR43601.1"/>
    <property type="molecule type" value="Genomic_DNA"/>
</dbReference>
<dbReference type="RefSeq" id="WP_015911984.1">
    <property type="nucleotide sequence ID" value="NC_012004.1"/>
</dbReference>
<dbReference type="SMR" id="B9DVX9"/>
<dbReference type="STRING" id="218495.SUB1691"/>
<dbReference type="KEGG" id="sub:SUB1691"/>
<dbReference type="eggNOG" id="COG0240">
    <property type="taxonomic scope" value="Bacteria"/>
</dbReference>
<dbReference type="HOGENOM" id="CLU_033449_0_2_9"/>
<dbReference type="OrthoDB" id="9812273at2"/>
<dbReference type="UniPathway" id="UPA00940"/>
<dbReference type="Proteomes" id="UP000000449">
    <property type="component" value="Chromosome"/>
</dbReference>
<dbReference type="GO" id="GO:0005829">
    <property type="term" value="C:cytosol"/>
    <property type="evidence" value="ECO:0007669"/>
    <property type="project" value="TreeGrafter"/>
</dbReference>
<dbReference type="GO" id="GO:0047952">
    <property type="term" value="F:glycerol-3-phosphate dehydrogenase [NAD(P)+] activity"/>
    <property type="evidence" value="ECO:0007669"/>
    <property type="project" value="UniProtKB-UniRule"/>
</dbReference>
<dbReference type="GO" id="GO:0051287">
    <property type="term" value="F:NAD binding"/>
    <property type="evidence" value="ECO:0007669"/>
    <property type="project" value="InterPro"/>
</dbReference>
<dbReference type="GO" id="GO:0005975">
    <property type="term" value="P:carbohydrate metabolic process"/>
    <property type="evidence" value="ECO:0007669"/>
    <property type="project" value="InterPro"/>
</dbReference>
<dbReference type="GO" id="GO:0046167">
    <property type="term" value="P:glycerol-3-phosphate biosynthetic process"/>
    <property type="evidence" value="ECO:0007669"/>
    <property type="project" value="UniProtKB-UniRule"/>
</dbReference>
<dbReference type="GO" id="GO:0046168">
    <property type="term" value="P:glycerol-3-phosphate catabolic process"/>
    <property type="evidence" value="ECO:0007669"/>
    <property type="project" value="InterPro"/>
</dbReference>
<dbReference type="GO" id="GO:0006650">
    <property type="term" value="P:glycerophospholipid metabolic process"/>
    <property type="evidence" value="ECO:0007669"/>
    <property type="project" value="UniProtKB-UniRule"/>
</dbReference>
<dbReference type="GO" id="GO:0008654">
    <property type="term" value="P:phospholipid biosynthetic process"/>
    <property type="evidence" value="ECO:0007669"/>
    <property type="project" value="UniProtKB-KW"/>
</dbReference>
<dbReference type="FunFam" id="1.10.1040.10:FF:000001">
    <property type="entry name" value="Glycerol-3-phosphate dehydrogenase [NAD(P)+]"/>
    <property type="match status" value="1"/>
</dbReference>
<dbReference type="FunFam" id="3.40.50.720:FF:000019">
    <property type="entry name" value="Glycerol-3-phosphate dehydrogenase [NAD(P)+]"/>
    <property type="match status" value="1"/>
</dbReference>
<dbReference type="Gene3D" id="1.10.1040.10">
    <property type="entry name" value="N-(1-d-carboxylethyl)-l-norvaline Dehydrogenase, domain 2"/>
    <property type="match status" value="1"/>
</dbReference>
<dbReference type="Gene3D" id="3.40.50.720">
    <property type="entry name" value="NAD(P)-binding Rossmann-like Domain"/>
    <property type="match status" value="1"/>
</dbReference>
<dbReference type="HAMAP" id="MF_00394">
    <property type="entry name" value="NAD_Glyc3P_dehydrog"/>
    <property type="match status" value="1"/>
</dbReference>
<dbReference type="InterPro" id="IPR008927">
    <property type="entry name" value="6-PGluconate_DH-like_C_sf"/>
</dbReference>
<dbReference type="InterPro" id="IPR013328">
    <property type="entry name" value="6PGD_dom2"/>
</dbReference>
<dbReference type="InterPro" id="IPR006168">
    <property type="entry name" value="G3P_DH_NAD-dep"/>
</dbReference>
<dbReference type="InterPro" id="IPR006109">
    <property type="entry name" value="G3P_DH_NAD-dep_C"/>
</dbReference>
<dbReference type="InterPro" id="IPR011128">
    <property type="entry name" value="G3P_DH_NAD-dep_N"/>
</dbReference>
<dbReference type="InterPro" id="IPR036291">
    <property type="entry name" value="NAD(P)-bd_dom_sf"/>
</dbReference>
<dbReference type="NCBIfam" id="NF000940">
    <property type="entry name" value="PRK00094.1-2"/>
    <property type="match status" value="1"/>
</dbReference>
<dbReference type="NCBIfam" id="NF000941">
    <property type="entry name" value="PRK00094.1-3"/>
    <property type="match status" value="1"/>
</dbReference>
<dbReference type="NCBIfam" id="NF000942">
    <property type="entry name" value="PRK00094.1-4"/>
    <property type="match status" value="1"/>
</dbReference>
<dbReference type="PANTHER" id="PTHR11728">
    <property type="entry name" value="GLYCEROL-3-PHOSPHATE DEHYDROGENASE"/>
    <property type="match status" value="1"/>
</dbReference>
<dbReference type="PANTHER" id="PTHR11728:SF1">
    <property type="entry name" value="GLYCEROL-3-PHOSPHATE DEHYDROGENASE [NAD(+)] 2, CHLOROPLASTIC"/>
    <property type="match status" value="1"/>
</dbReference>
<dbReference type="Pfam" id="PF07479">
    <property type="entry name" value="NAD_Gly3P_dh_C"/>
    <property type="match status" value="1"/>
</dbReference>
<dbReference type="Pfam" id="PF01210">
    <property type="entry name" value="NAD_Gly3P_dh_N"/>
    <property type="match status" value="1"/>
</dbReference>
<dbReference type="PIRSF" id="PIRSF000114">
    <property type="entry name" value="Glycerol-3-P_dh"/>
    <property type="match status" value="1"/>
</dbReference>
<dbReference type="PRINTS" id="PR00077">
    <property type="entry name" value="GPDHDRGNASE"/>
</dbReference>
<dbReference type="SUPFAM" id="SSF48179">
    <property type="entry name" value="6-phosphogluconate dehydrogenase C-terminal domain-like"/>
    <property type="match status" value="1"/>
</dbReference>
<dbReference type="SUPFAM" id="SSF51735">
    <property type="entry name" value="NAD(P)-binding Rossmann-fold domains"/>
    <property type="match status" value="1"/>
</dbReference>
<dbReference type="PROSITE" id="PS00957">
    <property type="entry name" value="NAD_G3PDH"/>
    <property type="match status" value="1"/>
</dbReference>
<comment type="function">
    <text evidence="1">Catalyzes the reduction of the glycolytic intermediate dihydroxyacetone phosphate (DHAP) to sn-glycerol 3-phosphate (G3P), the key precursor for phospholipid synthesis.</text>
</comment>
<comment type="catalytic activity">
    <reaction evidence="1">
        <text>sn-glycerol 3-phosphate + NAD(+) = dihydroxyacetone phosphate + NADH + H(+)</text>
        <dbReference type="Rhea" id="RHEA:11092"/>
        <dbReference type="ChEBI" id="CHEBI:15378"/>
        <dbReference type="ChEBI" id="CHEBI:57540"/>
        <dbReference type="ChEBI" id="CHEBI:57597"/>
        <dbReference type="ChEBI" id="CHEBI:57642"/>
        <dbReference type="ChEBI" id="CHEBI:57945"/>
        <dbReference type="EC" id="1.1.1.94"/>
    </reaction>
    <physiologicalReaction direction="right-to-left" evidence="1">
        <dbReference type="Rhea" id="RHEA:11094"/>
    </physiologicalReaction>
</comment>
<comment type="catalytic activity">
    <reaction evidence="1">
        <text>sn-glycerol 3-phosphate + NADP(+) = dihydroxyacetone phosphate + NADPH + H(+)</text>
        <dbReference type="Rhea" id="RHEA:11096"/>
        <dbReference type="ChEBI" id="CHEBI:15378"/>
        <dbReference type="ChEBI" id="CHEBI:57597"/>
        <dbReference type="ChEBI" id="CHEBI:57642"/>
        <dbReference type="ChEBI" id="CHEBI:57783"/>
        <dbReference type="ChEBI" id="CHEBI:58349"/>
        <dbReference type="EC" id="1.1.1.94"/>
    </reaction>
    <physiologicalReaction direction="right-to-left" evidence="1">
        <dbReference type="Rhea" id="RHEA:11098"/>
    </physiologicalReaction>
</comment>
<comment type="pathway">
    <text evidence="1">Membrane lipid metabolism; glycerophospholipid metabolism.</text>
</comment>
<comment type="subcellular location">
    <subcellularLocation>
        <location evidence="1">Cytoplasm</location>
    </subcellularLocation>
</comment>
<comment type="similarity">
    <text evidence="1">Belongs to the NAD-dependent glycerol-3-phosphate dehydrogenase family.</text>
</comment>
<gene>
    <name evidence="1" type="primary">gpsA</name>
    <name type="ordered locus">SUB1691</name>
</gene>
<keyword id="KW-0963">Cytoplasm</keyword>
<keyword id="KW-0444">Lipid biosynthesis</keyword>
<keyword id="KW-0443">Lipid metabolism</keyword>
<keyword id="KW-0520">NAD</keyword>
<keyword id="KW-0521">NADP</keyword>
<keyword id="KW-0547">Nucleotide-binding</keyword>
<keyword id="KW-0560">Oxidoreductase</keyword>
<keyword id="KW-0594">Phospholipid biosynthesis</keyword>
<keyword id="KW-1208">Phospholipid metabolism</keyword>
<keyword id="KW-1185">Reference proteome</keyword>
<reference key="1">
    <citation type="journal article" date="2009" name="BMC Genomics">
        <title>Evidence for niche adaptation in the genome of the bovine pathogen Streptococcus uberis.</title>
        <authorList>
            <person name="Ward P.N."/>
            <person name="Holden M.T.G."/>
            <person name="Leigh J.A."/>
            <person name="Lennard N."/>
            <person name="Bignell A."/>
            <person name="Barron A."/>
            <person name="Clark L."/>
            <person name="Quail M.A."/>
            <person name="Woodward J."/>
            <person name="Barrell B.G."/>
            <person name="Egan S.A."/>
            <person name="Field T.R."/>
            <person name="Maskell D."/>
            <person name="Kehoe M."/>
            <person name="Dowson C.G."/>
            <person name="Chanter N."/>
            <person name="Whatmore A.M."/>
            <person name="Bentley S.D."/>
            <person name="Parkhill J."/>
        </authorList>
    </citation>
    <scope>NUCLEOTIDE SEQUENCE [LARGE SCALE GENOMIC DNA]</scope>
    <source>
        <strain>ATCC BAA-854 / 0140J</strain>
    </source>
</reference>
<protein>
    <recommendedName>
        <fullName evidence="1">Glycerol-3-phosphate dehydrogenase [NAD(P)+]</fullName>
        <ecNumber evidence="1">1.1.1.94</ecNumber>
    </recommendedName>
    <alternativeName>
        <fullName evidence="1">NAD(P)(+)-dependent glycerol-3-phosphate dehydrogenase</fullName>
    </alternativeName>
    <alternativeName>
        <fullName evidence="1">NAD(P)H-dependent dihydroxyacetone-phosphate reductase</fullName>
    </alternativeName>
</protein>
<feature type="chain" id="PRO_1000190178" description="Glycerol-3-phosphate dehydrogenase [NAD(P)+]">
    <location>
        <begin position="1"/>
        <end position="338"/>
    </location>
</feature>
<feature type="active site" description="Proton acceptor" evidence="1">
    <location>
        <position position="194"/>
    </location>
</feature>
<feature type="binding site" evidence="1">
    <location>
        <position position="13"/>
    </location>
    <ligand>
        <name>NADPH</name>
        <dbReference type="ChEBI" id="CHEBI:57783"/>
    </ligand>
</feature>
<feature type="binding site" evidence="1">
    <location>
        <position position="14"/>
    </location>
    <ligand>
        <name>NADPH</name>
        <dbReference type="ChEBI" id="CHEBI:57783"/>
    </ligand>
</feature>
<feature type="binding site" evidence="1">
    <location>
        <position position="108"/>
    </location>
    <ligand>
        <name>NADPH</name>
        <dbReference type="ChEBI" id="CHEBI:57783"/>
    </ligand>
</feature>
<feature type="binding site" evidence="1">
    <location>
        <position position="108"/>
    </location>
    <ligand>
        <name>sn-glycerol 3-phosphate</name>
        <dbReference type="ChEBI" id="CHEBI:57597"/>
    </ligand>
</feature>
<feature type="binding site" evidence="1">
    <location>
        <position position="139"/>
    </location>
    <ligand>
        <name>sn-glycerol 3-phosphate</name>
        <dbReference type="ChEBI" id="CHEBI:57597"/>
    </ligand>
</feature>
<feature type="binding site" evidence="1">
    <location>
        <position position="141"/>
    </location>
    <ligand>
        <name>sn-glycerol 3-phosphate</name>
        <dbReference type="ChEBI" id="CHEBI:57597"/>
    </ligand>
</feature>
<feature type="binding site" evidence="1">
    <location>
        <position position="143"/>
    </location>
    <ligand>
        <name>NADPH</name>
        <dbReference type="ChEBI" id="CHEBI:57783"/>
    </ligand>
</feature>
<feature type="binding site" evidence="1">
    <location>
        <position position="194"/>
    </location>
    <ligand>
        <name>sn-glycerol 3-phosphate</name>
        <dbReference type="ChEBI" id="CHEBI:57597"/>
    </ligand>
</feature>
<feature type="binding site" evidence="1">
    <location>
        <position position="247"/>
    </location>
    <ligand>
        <name>sn-glycerol 3-phosphate</name>
        <dbReference type="ChEBI" id="CHEBI:57597"/>
    </ligand>
</feature>
<feature type="binding site" evidence="1">
    <location>
        <position position="257"/>
    </location>
    <ligand>
        <name>sn-glycerol 3-phosphate</name>
        <dbReference type="ChEBI" id="CHEBI:57597"/>
    </ligand>
</feature>
<feature type="binding site" evidence="1">
    <location>
        <position position="258"/>
    </location>
    <ligand>
        <name>NADPH</name>
        <dbReference type="ChEBI" id="CHEBI:57783"/>
    </ligand>
</feature>
<feature type="binding site" evidence="1">
    <location>
        <position position="258"/>
    </location>
    <ligand>
        <name>sn-glycerol 3-phosphate</name>
        <dbReference type="ChEBI" id="CHEBI:57597"/>
    </ligand>
</feature>
<feature type="binding site" evidence="1">
    <location>
        <position position="259"/>
    </location>
    <ligand>
        <name>sn-glycerol 3-phosphate</name>
        <dbReference type="ChEBI" id="CHEBI:57597"/>
    </ligand>
</feature>
<feature type="binding site" evidence="1">
    <location>
        <position position="282"/>
    </location>
    <ligand>
        <name>NADPH</name>
        <dbReference type="ChEBI" id="CHEBI:57783"/>
    </ligand>
</feature>
<feature type="binding site" evidence="1">
    <location>
        <position position="284"/>
    </location>
    <ligand>
        <name>NADPH</name>
        <dbReference type="ChEBI" id="CHEBI:57783"/>
    </ligand>
</feature>
<proteinExistence type="inferred from homology"/>
<sequence length="338" mass="36645">MSNEKIAILGPGSWGTALAQVLNDNGHQVCLWGDSQEQIDEINQKHTNTRYFKDIVIDEKIKATTDLKEALKDANAILFVVPTKVTRLVAKQVAETLDHKVIMMHASKGLEPGTHERLSTVISEEVPAELRSEIVVVSGPSHAEETIVRDITLITAASRDLEAAKYVQALFSNHYFRLYTNSDVIGVETAGALKNIIAVGAGALHGLGYGDNAKAAVITRGLAEITRLGVKLGADPLTYSGLSGVGDLIVTGTSVHSRNWRAGDALGRGEKLEDIERNMGMVIEGISTTKVAYEIAQELGVYMPITTAIYKSIYEGAGIKESILGMMSNEFRSENEWH</sequence>
<evidence type="ECO:0000255" key="1">
    <source>
        <dbReference type="HAMAP-Rule" id="MF_00394"/>
    </source>
</evidence>